<protein>
    <recommendedName>
        <fullName evidence="1">tRNA uridine 5-carboxymethylaminomethyl modification enzyme MnmG</fullName>
    </recommendedName>
    <alternativeName>
        <fullName evidence="1">Glucose-inhibited division protein A</fullName>
    </alternativeName>
</protein>
<gene>
    <name evidence="1" type="primary">mnmG</name>
    <name evidence="1" type="synonym">gidA</name>
    <name type="ordered locus">plu0049</name>
</gene>
<keyword id="KW-0963">Cytoplasm</keyword>
<keyword id="KW-0274">FAD</keyword>
<keyword id="KW-0285">Flavoprotein</keyword>
<keyword id="KW-0520">NAD</keyword>
<keyword id="KW-1185">Reference proteome</keyword>
<keyword id="KW-0819">tRNA processing</keyword>
<reference key="1">
    <citation type="journal article" date="2003" name="Nat. Biotechnol.">
        <title>The genome sequence of the entomopathogenic bacterium Photorhabdus luminescens.</title>
        <authorList>
            <person name="Duchaud E."/>
            <person name="Rusniok C."/>
            <person name="Frangeul L."/>
            <person name="Buchrieser C."/>
            <person name="Givaudan A."/>
            <person name="Taourit S."/>
            <person name="Bocs S."/>
            <person name="Boursaux-Eude C."/>
            <person name="Chandler M."/>
            <person name="Charles J.-F."/>
            <person name="Dassa E."/>
            <person name="Derose R."/>
            <person name="Derzelle S."/>
            <person name="Freyssinet G."/>
            <person name="Gaudriault S."/>
            <person name="Medigue C."/>
            <person name="Lanois A."/>
            <person name="Powell K."/>
            <person name="Siguier P."/>
            <person name="Vincent R."/>
            <person name="Wingate V."/>
            <person name="Zouine M."/>
            <person name="Glaser P."/>
            <person name="Boemare N."/>
            <person name="Danchin A."/>
            <person name="Kunst F."/>
        </authorList>
    </citation>
    <scope>NUCLEOTIDE SEQUENCE [LARGE SCALE GENOMIC DNA]</scope>
    <source>
        <strain>DSM 15139 / CIP 105565 / TT01</strain>
    </source>
</reference>
<organism>
    <name type="scientific">Photorhabdus laumondii subsp. laumondii (strain DSM 15139 / CIP 105565 / TT01)</name>
    <name type="common">Photorhabdus luminescens subsp. laumondii</name>
    <dbReference type="NCBI Taxonomy" id="243265"/>
    <lineage>
        <taxon>Bacteria</taxon>
        <taxon>Pseudomonadati</taxon>
        <taxon>Pseudomonadota</taxon>
        <taxon>Gammaproteobacteria</taxon>
        <taxon>Enterobacterales</taxon>
        <taxon>Morganellaceae</taxon>
        <taxon>Photorhabdus</taxon>
    </lineage>
</organism>
<feature type="chain" id="PRO_0000117148" description="tRNA uridine 5-carboxymethylaminomethyl modification enzyme MnmG">
    <location>
        <begin position="1"/>
        <end position="629"/>
    </location>
</feature>
<feature type="binding site" evidence="1">
    <location>
        <begin position="13"/>
        <end position="18"/>
    </location>
    <ligand>
        <name>FAD</name>
        <dbReference type="ChEBI" id="CHEBI:57692"/>
    </ligand>
</feature>
<feature type="binding site" evidence="1">
    <location>
        <begin position="273"/>
        <end position="287"/>
    </location>
    <ligand>
        <name>NAD(+)</name>
        <dbReference type="ChEBI" id="CHEBI:57540"/>
    </ligand>
</feature>
<comment type="function">
    <text evidence="1">NAD-binding protein involved in the addition of a carboxymethylaminomethyl (cmnm) group at the wobble position (U34) of certain tRNAs, forming tRNA-cmnm(5)s(2)U34.</text>
</comment>
<comment type="cofactor">
    <cofactor evidence="1">
        <name>FAD</name>
        <dbReference type="ChEBI" id="CHEBI:57692"/>
    </cofactor>
</comment>
<comment type="subunit">
    <text evidence="1">Homodimer. Heterotetramer of two MnmE and two MnmG subunits.</text>
</comment>
<comment type="subcellular location">
    <subcellularLocation>
        <location evidence="1">Cytoplasm</location>
    </subcellularLocation>
</comment>
<comment type="similarity">
    <text evidence="1">Belongs to the MnmG family.</text>
</comment>
<dbReference type="EMBL" id="BX571859">
    <property type="protein sequence ID" value="CAE12344.1"/>
    <property type="molecule type" value="Genomic_DNA"/>
</dbReference>
<dbReference type="RefSeq" id="WP_011144461.1">
    <property type="nucleotide sequence ID" value="NC_005126.1"/>
</dbReference>
<dbReference type="SMR" id="Q7NA86"/>
<dbReference type="STRING" id="243265.plu0049"/>
<dbReference type="KEGG" id="plu:plu0049"/>
<dbReference type="eggNOG" id="COG0445">
    <property type="taxonomic scope" value="Bacteria"/>
</dbReference>
<dbReference type="HOGENOM" id="CLU_007831_2_2_6"/>
<dbReference type="OrthoDB" id="9815560at2"/>
<dbReference type="Proteomes" id="UP000002514">
    <property type="component" value="Chromosome"/>
</dbReference>
<dbReference type="GO" id="GO:0005829">
    <property type="term" value="C:cytosol"/>
    <property type="evidence" value="ECO:0007669"/>
    <property type="project" value="TreeGrafter"/>
</dbReference>
<dbReference type="GO" id="GO:0050660">
    <property type="term" value="F:flavin adenine dinucleotide binding"/>
    <property type="evidence" value="ECO:0007669"/>
    <property type="project" value="UniProtKB-UniRule"/>
</dbReference>
<dbReference type="GO" id="GO:0030488">
    <property type="term" value="P:tRNA methylation"/>
    <property type="evidence" value="ECO:0007669"/>
    <property type="project" value="TreeGrafter"/>
</dbReference>
<dbReference type="GO" id="GO:0002098">
    <property type="term" value="P:tRNA wobble uridine modification"/>
    <property type="evidence" value="ECO:0007669"/>
    <property type="project" value="InterPro"/>
</dbReference>
<dbReference type="FunFam" id="1.10.10.1800:FF:000001">
    <property type="entry name" value="tRNA uridine 5-carboxymethylaminomethyl modification enzyme MnmG"/>
    <property type="match status" value="1"/>
</dbReference>
<dbReference type="FunFam" id="1.10.150.570:FF:000001">
    <property type="entry name" value="tRNA uridine 5-carboxymethylaminomethyl modification enzyme MnmG"/>
    <property type="match status" value="1"/>
</dbReference>
<dbReference type="FunFam" id="3.50.50.60:FF:000002">
    <property type="entry name" value="tRNA uridine 5-carboxymethylaminomethyl modification enzyme MnmG"/>
    <property type="match status" value="1"/>
</dbReference>
<dbReference type="FunFam" id="3.50.50.60:FF:000010">
    <property type="entry name" value="tRNA uridine 5-carboxymethylaminomethyl modification enzyme MnmG"/>
    <property type="match status" value="1"/>
</dbReference>
<dbReference type="Gene3D" id="3.50.50.60">
    <property type="entry name" value="FAD/NAD(P)-binding domain"/>
    <property type="match status" value="2"/>
</dbReference>
<dbReference type="Gene3D" id="1.10.150.570">
    <property type="entry name" value="GidA associated domain, C-terminal subdomain"/>
    <property type="match status" value="1"/>
</dbReference>
<dbReference type="Gene3D" id="1.10.10.1800">
    <property type="entry name" value="tRNA uridine 5-carboxymethylaminomethyl modification enzyme MnmG/GidA"/>
    <property type="match status" value="1"/>
</dbReference>
<dbReference type="HAMAP" id="MF_00129">
    <property type="entry name" value="MnmG_GidA"/>
    <property type="match status" value="1"/>
</dbReference>
<dbReference type="InterPro" id="IPR036188">
    <property type="entry name" value="FAD/NAD-bd_sf"/>
</dbReference>
<dbReference type="InterPro" id="IPR049312">
    <property type="entry name" value="GIDA_C_N"/>
</dbReference>
<dbReference type="InterPro" id="IPR004416">
    <property type="entry name" value="MnmG"/>
</dbReference>
<dbReference type="InterPro" id="IPR002218">
    <property type="entry name" value="MnmG-rel"/>
</dbReference>
<dbReference type="InterPro" id="IPR020595">
    <property type="entry name" value="MnmG-rel_CS"/>
</dbReference>
<dbReference type="InterPro" id="IPR026904">
    <property type="entry name" value="MnmG_C"/>
</dbReference>
<dbReference type="InterPro" id="IPR047001">
    <property type="entry name" value="MnmG_C_subdom"/>
</dbReference>
<dbReference type="InterPro" id="IPR044920">
    <property type="entry name" value="MnmG_C_subdom_sf"/>
</dbReference>
<dbReference type="InterPro" id="IPR040131">
    <property type="entry name" value="MnmG_N"/>
</dbReference>
<dbReference type="NCBIfam" id="TIGR00136">
    <property type="entry name" value="mnmG_gidA"/>
    <property type="match status" value="1"/>
</dbReference>
<dbReference type="PANTHER" id="PTHR11806">
    <property type="entry name" value="GLUCOSE INHIBITED DIVISION PROTEIN A"/>
    <property type="match status" value="1"/>
</dbReference>
<dbReference type="PANTHER" id="PTHR11806:SF0">
    <property type="entry name" value="PROTEIN MTO1 HOMOLOG, MITOCHONDRIAL"/>
    <property type="match status" value="1"/>
</dbReference>
<dbReference type="Pfam" id="PF01134">
    <property type="entry name" value="GIDA"/>
    <property type="match status" value="1"/>
</dbReference>
<dbReference type="Pfam" id="PF21680">
    <property type="entry name" value="GIDA_C_1st"/>
    <property type="match status" value="1"/>
</dbReference>
<dbReference type="Pfam" id="PF13932">
    <property type="entry name" value="SAM_GIDA_C"/>
    <property type="match status" value="1"/>
</dbReference>
<dbReference type="SMART" id="SM01228">
    <property type="entry name" value="GIDA_assoc_3"/>
    <property type="match status" value="1"/>
</dbReference>
<dbReference type="SUPFAM" id="SSF51905">
    <property type="entry name" value="FAD/NAD(P)-binding domain"/>
    <property type="match status" value="1"/>
</dbReference>
<dbReference type="PROSITE" id="PS01280">
    <property type="entry name" value="GIDA_1"/>
    <property type="match status" value="1"/>
</dbReference>
<dbReference type="PROSITE" id="PS01281">
    <property type="entry name" value="GIDA_2"/>
    <property type="match status" value="1"/>
</dbReference>
<sequence>MFYPEQFDVIIIGGGHAGTEAAMAAARMGRQTLLLTHNIDTLGQMSCNPAIGGIGKGHLVKEIDALGGLMAKATDQAGIQFRTLNASKGPAVRATRAQADRVLYRQAVRMALENQPNLMIFQQPVEDLIVENDTVTGAVTRMGLKFRAKAVVLTVGTFLDGKIHIGLENYSGGRAGGPPAISLAQRLRELPLRVNRLKTGTPPRIDARTIDFSQLTQQLGDNPTPVFSFLGNVKQHPQQIPCYITHTNEKTHDVIRNNLDRSPMYTGIIEGIGPRYCPSIEDKVMRFADRDAHQIFLEPEGLTSNEIYPNGISTSLPFDVQMQIVHSMKGMENARIIRPGYAIEYDFFDPRDLKQTLESKFIHGLFFAGQINGTTGYEEAAAQGLLAGLNAARYASEEESWFPRRDQAYIGVLVDDLCTLGTKEPYRMFTSRAEYRLMLREDNADLRLTEKGRELGLVDDSRWEHYCRKLEMVEQERQRLRNIWIHPNSNNLNDINNILKMPLSKEANGEDLLRRPEMNYKLLTSLPLFSPSLEEPQAADQVEIQVKYEGYIARQQEEIEKQLRNENTSLPVDLDYRQISGLSNEVVAKLNDHKPSSIGQASRISGVTPAAISILLVWLKKQGLLRRSS</sequence>
<proteinExistence type="inferred from homology"/>
<evidence type="ECO:0000255" key="1">
    <source>
        <dbReference type="HAMAP-Rule" id="MF_00129"/>
    </source>
</evidence>
<name>MNMG_PHOLL</name>
<accession>Q7NA86</accession>